<organism>
    <name type="scientific">Coxiella burnetii (strain RSA 493 / Nine Mile phase I)</name>
    <dbReference type="NCBI Taxonomy" id="227377"/>
    <lineage>
        <taxon>Bacteria</taxon>
        <taxon>Pseudomonadati</taxon>
        <taxon>Pseudomonadota</taxon>
        <taxon>Gammaproteobacteria</taxon>
        <taxon>Legionellales</taxon>
        <taxon>Coxiellaceae</taxon>
        <taxon>Coxiella</taxon>
    </lineage>
</organism>
<keyword id="KW-0489">Methyltransferase</keyword>
<keyword id="KW-1185">Reference proteome</keyword>
<keyword id="KW-0949">S-adenosyl-L-methionine</keyword>
<keyword id="KW-0808">Transferase</keyword>
<evidence type="ECO:0000255" key="1">
    <source>
        <dbReference type="HAMAP-Rule" id="MF_02126"/>
    </source>
</evidence>
<accession>Q83AD8</accession>
<gene>
    <name evidence="1" type="primary">prmC</name>
    <name type="synonym">hemK</name>
    <name type="ordered locus">CBU_1964</name>
</gene>
<proteinExistence type="inferred from homology"/>
<comment type="function">
    <text evidence="1">Methylates the class 1 translation termination release factors RF1/PrfA and RF2/PrfB on the glutamine residue of the universally conserved GGQ motif.</text>
</comment>
<comment type="catalytic activity">
    <reaction evidence="1">
        <text>L-glutaminyl-[peptide chain release factor] + S-adenosyl-L-methionine = N(5)-methyl-L-glutaminyl-[peptide chain release factor] + S-adenosyl-L-homocysteine + H(+)</text>
        <dbReference type="Rhea" id="RHEA:42896"/>
        <dbReference type="Rhea" id="RHEA-COMP:10271"/>
        <dbReference type="Rhea" id="RHEA-COMP:10272"/>
        <dbReference type="ChEBI" id="CHEBI:15378"/>
        <dbReference type="ChEBI" id="CHEBI:30011"/>
        <dbReference type="ChEBI" id="CHEBI:57856"/>
        <dbReference type="ChEBI" id="CHEBI:59789"/>
        <dbReference type="ChEBI" id="CHEBI:61891"/>
        <dbReference type="EC" id="2.1.1.297"/>
    </reaction>
</comment>
<comment type="similarity">
    <text evidence="1">Belongs to the protein N5-glutamine methyltransferase family. PrmC subfamily.</text>
</comment>
<reference key="1">
    <citation type="journal article" date="2003" name="Proc. Natl. Acad. Sci. U.S.A.">
        <title>Complete genome sequence of the Q-fever pathogen, Coxiella burnetii.</title>
        <authorList>
            <person name="Seshadri R."/>
            <person name="Paulsen I.T."/>
            <person name="Eisen J.A."/>
            <person name="Read T.D."/>
            <person name="Nelson K.E."/>
            <person name="Nelson W.C."/>
            <person name="Ward N.L."/>
            <person name="Tettelin H."/>
            <person name="Davidsen T.M."/>
            <person name="Beanan M.J."/>
            <person name="DeBoy R.T."/>
            <person name="Daugherty S.C."/>
            <person name="Brinkac L.M."/>
            <person name="Madupu R."/>
            <person name="Dodson R.J."/>
            <person name="Khouri H.M."/>
            <person name="Lee K.H."/>
            <person name="Carty H.A."/>
            <person name="Scanlan D."/>
            <person name="Heinzen R.A."/>
            <person name="Thompson H.A."/>
            <person name="Samuel J.E."/>
            <person name="Fraser C.M."/>
            <person name="Heidelberg J.F."/>
        </authorList>
    </citation>
    <scope>NUCLEOTIDE SEQUENCE [LARGE SCALE GENOMIC DNA]</scope>
    <source>
        <strain>RSA 493 / Nine Mile phase I</strain>
    </source>
</reference>
<protein>
    <recommendedName>
        <fullName evidence="1">Release factor glutamine methyltransferase</fullName>
        <shortName evidence="1">RF MTase</shortName>
        <ecNumber evidence="1">2.1.1.297</ecNumber>
    </recommendedName>
    <alternativeName>
        <fullName evidence="1">N5-glutamine methyltransferase PrmC</fullName>
    </alternativeName>
    <alternativeName>
        <fullName evidence="1">Protein-(glutamine-N5) MTase PrmC</fullName>
    </alternativeName>
    <alternativeName>
        <fullName evidence="1">Protein-glutamine N-methyltransferase PrmC</fullName>
    </alternativeName>
</protein>
<sequence length="277" mass="31271">MLSIKEATKNISQQLTTVSKTPRLDAELLLECVLKKSRADLFAYPEIQLNSSQQKTLSAYVKRRLKGEPIAYILGQKEFWSLNLKVTPDVLIPRPETEMLVEWILKNLPKDEKLRIADLGTGSGAVALAIAVERPHWTIDATDNSQAALKIAEINAKQHEIKNCNFYHGEWCQALPRRDYHAIVGNPPYIPDKDQHLQQLKHEPREALAAGSDGLSAIKIIIHEAKSYLVNGGWLLLEHGYDQAEKIMTLMQADGYREITDRRDLAGLSRMMVARRG</sequence>
<feature type="chain" id="PRO_0000414516" description="Release factor glutamine methyltransferase">
    <location>
        <begin position="1"/>
        <end position="277"/>
    </location>
</feature>
<feature type="binding site" evidence="1">
    <location>
        <begin position="120"/>
        <end position="124"/>
    </location>
    <ligand>
        <name>S-adenosyl-L-methionine</name>
        <dbReference type="ChEBI" id="CHEBI:59789"/>
    </ligand>
</feature>
<feature type="binding site" evidence="1">
    <location>
        <position position="143"/>
    </location>
    <ligand>
        <name>S-adenosyl-L-methionine</name>
        <dbReference type="ChEBI" id="CHEBI:59789"/>
    </ligand>
</feature>
<feature type="binding site" evidence="1">
    <location>
        <position position="171"/>
    </location>
    <ligand>
        <name>S-adenosyl-L-methionine</name>
        <dbReference type="ChEBI" id="CHEBI:59789"/>
    </ligand>
</feature>
<feature type="binding site" evidence="1">
    <location>
        <begin position="186"/>
        <end position="189"/>
    </location>
    <ligand>
        <name>substrate</name>
    </ligand>
</feature>
<feature type="binding site" evidence="1">
    <location>
        <position position="186"/>
    </location>
    <ligand>
        <name>S-adenosyl-L-methionine</name>
        <dbReference type="ChEBI" id="CHEBI:59789"/>
    </ligand>
</feature>
<dbReference type="EC" id="2.1.1.297" evidence="1"/>
<dbReference type="EMBL" id="AE016828">
    <property type="protein sequence ID" value="AAO91453.1"/>
    <property type="molecule type" value="Genomic_DNA"/>
</dbReference>
<dbReference type="RefSeq" id="NP_820939.1">
    <property type="nucleotide sequence ID" value="NC_002971.3"/>
</dbReference>
<dbReference type="RefSeq" id="WP_010958568.1">
    <property type="nucleotide sequence ID" value="NC_002971.4"/>
</dbReference>
<dbReference type="SMR" id="Q83AD8"/>
<dbReference type="STRING" id="227377.CBU_1964"/>
<dbReference type="EnsemblBacteria" id="AAO91453">
    <property type="protein sequence ID" value="AAO91453"/>
    <property type="gene ID" value="CBU_1964"/>
</dbReference>
<dbReference type="GeneID" id="1209877"/>
<dbReference type="KEGG" id="cbu:CBU_1964"/>
<dbReference type="PATRIC" id="fig|227377.7.peg.1952"/>
<dbReference type="eggNOG" id="COG2890">
    <property type="taxonomic scope" value="Bacteria"/>
</dbReference>
<dbReference type="HOGENOM" id="CLU_018398_3_1_6"/>
<dbReference type="OrthoDB" id="9800643at2"/>
<dbReference type="Proteomes" id="UP000002671">
    <property type="component" value="Chromosome"/>
</dbReference>
<dbReference type="GO" id="GO:0003676">
    <property type="term" value="F:nucleic acid binding"/>
    <property type="evidence" value="ECO:0007669"/>
    <property type="project" value="InterPro"/>
</dbReference>
<dbReference type="GO" id="GO:0102559">
    <property type="term" value="F:protein-(glutamine-N5) methyltransferase activity"/>
    <property type="evidence" value="ECO:0007669"/>
    <property type="project" value="UniProtKB-EC"/>
</dbReference>
<dbReference type="GO" id="GO:0036009">
    <property type="term" value="F:protein-glutamine N-methyltransferase activity"/>
    <property type="evidence" value="ECO:0000318"/>
    <property type="project" value="GO_Central"/>
</dbReference>
<dbReference type="GO" id="GO:0032259">
    <property type="term" value="P:methylation"/>
    <property type="evidence" value="ECO:0007669"/>
    <property type="project" value="UniProtKB-KW"/>
</dbReference>
<dbReference type="GO" id="GO:0006415">
    <property type="term" value="P:translational termination"/>
    <property type="evidence" value="ECO:0000318"/>
    <property type="project" value="GO_Central"/>
</dbReference>
<dbReference type="CDD" id="cd02440">
    <property type="entry name" value="AdoMet_MTases"/>
    <property type="match status" value="1"/>
</dbReference>
<dbReference type="FunFam" id="3.40.50.150:FF:000053">
    <property type="entry name" value="Release factor glutamine methyltransferase"/>
    <property type="match status" value="1"/>
</dbReference>
<dbReference type="Gene3D" id="1.10.8.10">
    <property type="entry name" value="DNA helicase RuvA subunit, C-terminal domain"/>
    <property type="match status" value="1"/>
</dbReference>
<dbReference type="Gene3D" id="3.40.50.150">
    <property type="entry name" value="Vaccinia Virus protein VP39"/>
    <property type="match status" value="1"/>
</dbReference>
<dbReference type="HAMAP" id="MF_02126">
    <property type="entry name" value="RF_methyltr_PrmC"/>
    <property type="match status" value="1"/>
</dbReference>
<dbReference type="InterPro" id="IPR002052">
    <property type="entry name" value="DNA_methylase_N6_adenine_CS"/>
</dbReference>
<dbReference type="InterPro" id="IPR004556">
    <property type="entry name" value="HemK-like"/>
</dbReference>
<dbReference type="InterPro" id="IPR050320">
    <property type="entry name" value="N5-glutamine_MTase"/>
</dbReference>
<dbReference type="InterPro" id="IPR040758">
    <property type="entry name" value="PrmC_N"/>
</dbReference>
<dbReference type="InterPro" id="IPR019874">
    <property type="entry name" value="RF_methyltr_PrmC"/>
</dbReference>
<dbReference type="InterPro" id="IPR029063">
    <property type="entry name" value="SAM-dependent_MTases_sf"/>
</dbReference>
<dbReference type="InterPro" id="IPR007848">
    <property type="entry name" value="Small_mtfrase_dom"/>
</dbReference>
<dbReference type="NCBIfam" id="TIGR00536">
    <property type="entry name" value="hemK_fam"/>
    <property type="match status" value="1"/>
</dbReference>
<dbReference type="NCBIfam" id="TIGR03534">
    <property type="entry name" value="RF_mod_PrmC"/>
    <property type="match status" value="1"/>
</dbReference>
<dbReference type="PANTHER" id="PTHR18895">
    <property type="entry name" value="HEMK METHYLTRANSFERASE"/>
    <property type="match status" value="1"/>
</dbReference>
<dbReference type="PANTHER" id="PTHR18895:SF74">
    <property type="entry name" value="MTRF1L RELEASE FACTOR GLUTAMINE METHYLTRANSFERASE"/>
    <property type="match status" value="1"/>
</dbReference>
<dbReference type="Pfam" id="PF05175">
    <property type="entry name" value="MTS"/>
    <property type="match status" value="1"/>
</dbReference>
<dbReference type="Pfam" id="PF17827">
    <property type="entry name" value="PrmC_N"/>
    <property type="match status" value="1"/>
</dbReference>
<dbReference type="SUPFAM" id="SSF53335">
    <property type="entry name" value="S-adenosyl-L-methionine-dependent methyltransferases"/>
    <property type="match status" value="1"/>
</dbReference>
<name>PRMC_COXBU</name>